<organism>
    <name type="scientific">Escherichia coli O17:K52:H18 (strain UMN026 / ExPEC)</name>
    <dbReference type="NCBI Taxonomy" id="585056"/>
    <lineage>
        <taxon>Bacteria</taxon>
        <taxon>Pseudomonadati</taxon>
        <taxon>Pseudomonadota</taxon>
        <taxon>Gammaproteobacteria</taxon>
        <taxon>Enterobacterales</taxon>
        <taxon>Enterobacteriaceae</taxon>
        <taxon>Escherichia</taxon>
    </lineage>
</organism>
<dbReference type="EMBL" id="CU928163">
    <property type="protein sequence ID" value="CAR14974.1"/>
    <property type="molecule type" value="Genomic_DNA"/>
</dbReference>
<dbReference type="RefSeq" id="WP_000185232.1">
    <property type="nucleotide sequence ID" value="NC_011751.1"/>
</dbReference>
<dbReference type="RefSeq" id="YP_002414479.1">
    <property type="nucleotide sequence ID" value="NC_011751.1"/>
</dbReference>
<dbReference type="SMR" id="B7NDX4"/>
<dbReference type="STRING" id="585056.ECUMN_3827"/>
<dbReference type="KEGG" id="eum:ECUMN_3827"/>
<dbReference type="PATRIC" id="fig|585056.7.peg.3998"/>
<dbReference type="HOGENOM" id="CLU_056916_0_0_6"/>
<dbReference type="Proteomes" id="UP000007097">
    <property type="component" value="Chromosome"/>
</dbReference>
<dbReference type="GO" id="GO:0005886">
    <property type="term" value="C:plasma membrane"/>
    <property type="evidence" value="ECO:0007669"/>
    <property type="project" value="UniProtKB-SubCell"/>
</dbReference>
<dbReference type="GO" id="GO:0022857">
    <property type="term" value="F:transmembrane transporter activity"/>
    <property type="evidence" value="ECO:0007669"/>
    <property type="project" value="InterPro"/>
</dbReference>
<dbReference type="CDD" id="cd17333">
    <property type="entry name" value="MFS_FucP_MFSD4_like"/>
    <property type="match status" value="1"/>
</dbReference>
<dbReference type="FunFam" id="1.20.1250.20:FF:000032">
    <property type="entry name" value="Protein TsgA"/>
    <property type="match status" value="1"/>
</dbReference>
<dbReference type="FunFam" id="1.20.1250.20:FF:000052">
    <property type="entry name" value="Protein TsgA"/>
    <property type="match status" value="1"/>
</dbReference>
<dbReference type="Gene3D" id="1.20.1250.20">
    <property type="entry name" value="MFS general substrate transporter like domains"/>
    <property type="match status" value="2"/>
</dbReference>
<dbReference type="HAMAP" id="MF_01044">
    <property type="entry name" value="MFS_TsgA"/>
    <property type="match status" value="1"/>
</dbReference>
<dbReference type="InterPro" id="IPR011701">
    <property type="entry name" value="MFS"/>
</dbReference>
<dbReference type="InterPro" id="IPR020846">
    <property type="entry name" value="MFS_dom"/>
</dbReference>
<dbReference type="InterPro" id="IPR036259">
    <property type="entry name" value="MFS_trans_sf"/>
</dbReference>
<dbReference type="InterPro" id="IPR023528">
    <property type="entry name" value="MFS_TsgA"/>
</dbReference>
<dbReference type="InterPro" id="IPR050375">
    <property type="entry name" value="MFS_TsgA-like"/>
</dbReference>
<dbReference type="NCBIfam" id="NF002982">
    <property type="entry name" value="PRK03699.1"/>
    <property type="match status" value="1"/>
</dbReference>
<dbReference type="PANTHER" id="PTHR43702">
    <property type="entry name" value="L-FUCOSE-PROTON SYMPORTER"/>
    <property type="match status" value="1"/>
</dbReference>
<dbReference type="PANTHER" id="PTHR43702:SF3">
    <property type="entry name" value="PROTEIN TSGA"/>
    <property type="match status" value="1"/>
</dbReference>
<dbReference type="Pfam" id="PF07690">
    <property type="entry name" value="MFS_1"/>
    <property type="match status" value="1"/>
</dbReference>
<dbReference type="SUPFAM" id="SSF103473">
    <property type="entry name" value="MFS general substrate transporter"/>
    <property type="match status" value="1"/>
</dbReference>
<dbReference type="PROSITE" id="PS50850">
    <property type="entry name" value="MFS"/>
    <property type="match status" value="1"/>
</dbReference>
<proteinExistence type="inferred from homology"/>
<keyword id="KW-0997">Cell inner membrane</keyword>
<keyword id="KW-1003">Cell membrane</keyword>
<keyword id="KW-0472">Membrane</keyword>
<keyword id="KW-0812">Transmembrane</keyword>
<keyword id="KW-1133">Transmembrane helix</keyword>
<accession>B7NDX4</accession>
<protein>
    <recommendedName>
        <fullName evidence="1">Protein TsgA</fullName>
    </recommendedName>
</protein>
<evidence type="ECO:0000255" key="1">
    <source>
        <dbReference type="HAMAP-Rule" id="MF_01044"/>
    </source>
</evidence>
<comment type="subcellular location">
    <subcellularLocation>
        <location evidence="1">Cell inner membrane</location>
        <topology evidence="1">Multi-pass membrane protein</topology>
    </subcellularLocation>
</comment>
<comment type="similarity">
    <text evidence="1">Belongs to the major facilitator superfamily. TsgA family.</text>
</comment>
<gene>
    <name evidence="1" type="primary">tsgA</name>
    <name type="ordered locus">ECUMN_3827</name>
</gene>
<name>TSGA_ECOLU</name>
<reference key="1">
    <citation type="journal article" date="2009" name="PLoS Genet.">
        <title>Organised genome dynamics in the Escherichia coli species results in highly diverse adaptive paths.</title>
        <authorList>
            <person name="Touchon M."/>
            <person name="Hoede C."/>
            <person name="Tenaillon O."/>
            <person name="Barbe V."/>
            <person name="Baeriswyl S."/>
            <person name="Bidet P."/>
            <person name="Bingen E."/>
            <person name="Bonacorsi S."/>
            <person name="Bouchier C."/>
            <person name="Bouvet O."/>
            <person name="Calteau A."/>
            <person name="Chiapello H."/>
            <person name="Clermont O."/>
            <person name="Cruveiller S."/>
            <person name="Danchin A."/>
            <person name="Diard M."/>
            <person name="Dossat C."/>
            <person name="Karoui M.E."/>
            <person name="Frapy E."/>
            <person name="Garry L."/>
            <person name="Ghigo J.M."/>
            <person name="Gilles A.M."/>
            <person name="Johnson J."/>
            <person name="Le Bouguenec C."/>
            <person name="Lescat M."/>
            <person name="Mangenot S."/>
            <person name="Martinez-Jehanne V."/>
            <person name="Matic I."/>
            <person name="Nassif X."/>
            <person name="Oztas S."/>
            <person name="Petit M.A."/>
            <person name="Pichon C."/>
            <person name="Rouy Z."/>
            <person name="Ruf C.S."/>
            <person name="Schneider D."/>
            <person name="Tourret J."/>
            <person name="Vacherie B."/>
            <person name="Vallenet D."/>
            <person name="Medigue C."/>
            <person name="Rocha E.P.C."/>
            <person name="Denamur E."/>
        </authorList>
    </citation>
    <scope>NUCLEOTIDE SEQUENCE [LARGE SCALE GENOMIC DNA]</scope>
    <source>
        <strain>UMN026 / ExPEC</strain>
    </source>
</reference>
<feature type="chain" id="PRO_1000136141" description="Protein TsgA">
    <location>
        <begin position="1"/>
        <end position="393"/>
    </location>
</feature>
<feature type="transmembrane region" description="Helical" evidence="1">
    <location>
        <begin position="11"/>
        <end position="31"/>
    </location>
</feature>
<feature type="transmembrane region" description="Helical" evidence="1">
    <location>
        <begin position="51"/>
        <end position="71"/>
    </location>
</feature>
<feature type="transmembrane region" description="Helical" evidence="1">
    <location>
        <begin position="78"/>
        <end position="98"/>
    </location>
</feature>
<feature type="transmembrane region" description="Helical" evidence="1">
    <location>
        <begin position="101"/>
        <end position="121"/>
    </location>
</feature>
<feature type="transmembrane region" description="Helical" evidence="1">
    <location>
        <begin position="134"/>
        <end position="154"/>
    </location>
</feature>
<feature type="transmembrane region" description="Helical" evidence="1">
    <location>
        <begin position="162"/>
        <end position="182"/>
    </location>
</feature>
<feature type="transmembrane region" description="Helical" evidence="1">
    <location>
        <begin position="206"/>
        <end position="226"/>
    </location>
</feature>
<feature type="transmembrane region" description="Helical" evidence="1">
    <location>
        <begin position="245"/>
        <end position="265"/>
    </location>
</feature>
<feature type="transmembrane region" description="Helical" evidence="1">
    <location>
        <begin position="273"/>
        <end position="293"/>
    </location>
</feature>
<feature type="transmembrane region" description="Helical" evidence="1">
    <location>
        <begin position="297"/>
        <end position="317"/>
    </location>
</feature>
<feature type="transmembrane region" description="Helical" evidence="1">
    <location>
        <begin position="332"/>
        <end position="352"/>
    </location>
</feature>
<feature type="transmembrane region" description="Helical" evidence="1">
    <location>
        <begin position="361"/>
        <end position="381"/>
    </location>
</feature>
<sequence length="393" mass="43194">MTNSNRIKLTWISFLSYALTGALVIVTGMVMGNIADYFNLPVSSMSNTFTFLNAGILISIFLNAWLMEIVPLKTQLRFGFLLMVLAVAGLMFSHSLALFSAAMFILGVVSGITMSIGTFLITQMYEGRQRGSRLLFTDSFFSMAGMIFPMIAAFLLARSIEWYWVYACIGLVYVAIFILTFGCEFPALGKHAPKTDAPVEKEKWGIGVLFLSIAALCYILGQLGFISWVPEYAKGLGMSLNDAGTLVSNFWMSYMVGMWAFSFILRFFDLQRILTVLAGLAAILMYVFNTGTPAHMAWSILALGFFSSAIYTTIITLGSQQTKVPSPKLVNFVLTCGTIGTMLTFVVTGPIVEHSGPQAALLTANGLYAVVFVMCFLLGFVSRHRQHNTLTSH</sequence>